<dbReference type="EC" id="2.5.1.75" evidence="1"/>
<dbReference type="EMBL" id="CR848038">
    <property type="protein sequence ID" value="CAH64265.1"/>
    <property type="status" value="ALT_INIT"/>
    <property type="molecule type" value="Genomic_DNA"/>
</dbReference>
<dbReference type="RefSeq" id="WP_006344429.1">
    <property type="nucleotide sequence ID" value="NC_004552.2"/>
</dbReference>
<dbReference type="SMR" id="Q5L530"/>
<dbReference type="GeneID" id="93024377"/>
<dbReference type="KEGG" id="cab:CAB823"/>
<dbReference type="eggNOG" id="COG0324">
    <property type="taxonomic scope" value="Bacteria"/>
</dbReference>
<dbReference type="HOGENOM" id="CLU_032616_0_1_0"/>
<dbReference type="OrthoDB" id="9776390at2"/>
<dbReference type="Proteomes" id="UP000001012">
    <property type="component" value="Chromosome"/>
</dbReference>
<dbReference type="GO" id="GO:0005524">
    <property type="term" value="F:ATP binding"/>
    <property type="evidence" value="ECO:0007669"/>
    <property type="project" value="UniProtKB-UniRule"/>
</dbReference>
<dbReference type="GO" id="GO:0052381">
    <property type="term" value="F:tRNA dimethylallyltransferase activity"/>
    <property type="evidence" value="ECO:0007669"/>
    <property type="project" value="UniProtKB-UniRule"/>
</dbReference>
<dbReference type="GO" id="GO:0006400">
    <property type="term" value="P:tRNA modification"/>
    <property type="evidence" value="ECO:0007669"/>
    <property type="project" value="TreeGrafter"/>
</dbReference>
<dbReference type="Gene3D" id="1.10.20.140">
    <property type="match status" value="1"/>
</dbReference>
<dbReference type="Gene3D" id="3.40.50.300">
    <property type="entry name" value="P-loop containing nucleotide triphosphate hydrolases"/>
    <property type="match status" value="1"/>
</dbReference>
<dbReference type="HAMAP" id="MF_00185">
    <property type="entry name" value="IPP_trans"/>
    <property type="match status" value="1"/>
</dbReference>
<dbReference type="InterPro" id="IPR039657">
    <property type="entry name" value="Dimethylallyltransferase"/>
</dbReference>
<dbReference type="InterPro" id="IPR018022">
    <property type="entry name" value="IPT"/>
</dbReference>
<dbReference type="InterPro" id="IPR027417">
    <property type="entry name" value="P-loop_NTPase"/>
</dbReference>
<dbReference type="NCBIfam" id="TIGR00174">
    <property type="entry name" value="miaA"/>
    <property type="match status" value="1"/>
</dbReference>
<dbReference type="PANTHER" id="PTHR11088">
    <property type="entry name" value="TRNA DIMETHYLALLYLTRANSFERASE"/>
    <property type="match status" value="1"/>
</dbReference>
<dbReference type="PANTHER" id="PTHR11088:SF60">
    <property type="entry name" value="TRNA DIMETHYLALLYLTRANSFERASE"/>
    <property type="match status" value="1"/>
</dbReference>
<dbReference type="Pfam" id="PF01715">
    <property type="entry name" value="IPPT"/>
    <property type="match status" value="1"/>
</dbReference>
<dbReference type="SUPFAM" id="SSF52540">
    <property type="entry name" value="P-loop containing nucleoside triphosphate hydrolases"/>
    <property type="match status" value="1"/>
</dbReference>
<feature type="chain" id="PRO_0000377114" description="tRNA dimethylallyltransferase">
    <location>
        <begin position="1"/>
        <end position="342"/>
    </location>
</feature>
<feature type="region of interest" description="Interaction with substrate tRNA" evidence="1">
    <location>
        <begin position="64"/>
        <end position="67"/>
    </location>
</feature>
<feature type="binding site" evidence="1">
    <location>
        <begin position="39"/>
        <end position="46"/>
    </location>
    <ligand>
        <name>ATP</name>
        <dbReference type="ChEBI" id="CHEBI:30616"/>
    </ligand>
</feature>
<feature type="binding site" evidence="1">
    <location>
        <begin position="41"/>
        <end position="46"/>
    </location>
    <ligand>
        <name>substrate</name>
    </ligand>
</feature>
<feature type="site" description="Interaction with substrate tRNA" evidence="1">
    <location>
        <position position="130"/>
    </location>
</feature>
<feature type="site" description="Interaction with substrate tRNA" evidence="1">
    <location>
        <position position="152"/>
    </location>
</feature>
<proteinExistence type="inferred from homology"/>
<protein>
    <recommendedName>
        <fullName evidence="1">tRNA dimethylallyltransferase</fullName>
        <ecNumber evidence="1">2.5.1.75</ecNumber>
    </recommendedName>
    <alternativeName>
        <fullName evidence="1">Dimethylallyl diphosphate:tRNA dimethylallyltransferase</fullName>
        <shortName evidence="1">DMAPP:tRNA dimethylallyltransferase</shortName>
        <shortName evidence="1">DMATase</shortName>
    </alternativeName>
    <alternativeName>
        <fullName evidence="1">Isopentenyl-diphosphate:tRNA isopentenyltransferase</fullName>
        <shortName evidence="1">IPP transferase</shortName>
        <shortName evidence="1">IPPT</shortName>
        <shortName evidence="1">IPTase</shortName>
    </alternativeName>
</protein>
<reference key="1">
    <citation type="journal article" date="2005" name="Genome Res.">
        <title>The Chlamydophila abortus genome sequence reveals an array of variable proteins that contribute to interspecies variation.</title>
        <authorList>
            <person name="Thomson N.R."/>
            <person name="Yeats C."/>
            <person name="Bell K."/>
            <person name="Holden M.T.G."/>
            <person name="Bentley S.D."/>
            <person name="Livingstone M."/>
            <person name="Cerdeno-Tarraga A.-M."/>
            <person name="Harris B."/>
            <person name="Doggett J."/>
            <person name="Ormond D."/>
            <person name="Mungall K."/>
            <person name="Clarke K."/>
            <person name="Feltwell T."/>
            <person name="Hance Z."/>
            <person name="Sanders M."/>
            <person name="Quail M.A."/>
            <person name="Price C."/>
            <person name="Barrell B.G."/>
            <person name="Parkhill J."/>
            <person name="Longbottom D."/>
        </authorList>
    </citation>
    <scope>NUCLEOTIDE SEQUENCE [LARGE SCALE GENOMIC DNA]</scope>
    <source>
        <strain>DSM 27085 / S26/3</strain>
    </source>
</reference>
<evidence type="ECO:0000255" key="1">
    <source>
        <dbReference type="HAMAP-Rule" id="MF_00185"/>
    </source>
</evidence>
<evidence type="ECO:0000305" key="2"/>
<gene>
    <name evidence="1" type="primary">miaA</name>
    <name type="ordered locus">CAB823</name>
</gene>
<organism>
    <name type="scientific">Chlamydia abortus (strain DSM 27085 / S26/3)</name>
    <name type="common">Chlamydophila abortus</name>
    <dbReference type="NCBI Taxonomy" id="218497"/>
    <lineage>
        <taxon>Bacteria</taxon>
        <taxon>Pseudomonadati</taxon>
        <taxon>Chlamydiota</taxon>
        <taxon>Chlamydiia</taxon>
        <taxon>Chlamydiales</taxon>
        <taxon>Chlamydiaceae</taxon>
        <taxon>Chlamydia/Chlamydophila group</taxon>
        <taxon>Chlamydia</taxon>
    </lineage>
</organism>
<keyword id="KW-0067">ATP-binding</keyword>
<keyword id="KW-0460">Magnesium</keyword>
<keyword id="KW-0547">Nucleotide-binding</keyword>
<keyword id="KW-0808">Transferase</keyword>
<keyword id="KW-0819">tRNA processing</keyword>
<sequence length="342" mass="39217">MRAPEFHANAMTSTGCDVCLDPQKSFAKLFKRTVILLAGPTGSGKTDVSLRLAPMIDGEIISVDSMQVYRGMDIGTAKVSWEDRQRIPHYLIDICHVQELFNAVDFYYQAIQACQNILSRNKVPILVGGTGFYFHTFLSGPPQGPSPDCDFRDKLALYIQEHGLSLLYENLCLKDPEYARTITKNDRNKIVRALEIIHLTGKKVSDHKWTKEASECQEYNCRGWFLSPPKELLRDTIHLRCQRMLEDDLIDEVHRLLKQGIRDNSSASRAIGYREWIEFIDQGSPAESYEAVKQKFITNTCHYTKKQRTWFKRYPIFRELPTLGLTAETIAAKIAEDYFLHG</sequence>
<accession>Q5L530</accession>
<comment type="function">
    <text evidence="1">Catalyzes the transfer of a dimethylallyl group onto the adenine at position 37 in tRNAs that read codons beginning with uridine, leading to the formation of N6-(dimethylallyl)adenosine (i(6)A).</text>
</comment>
<comment type="catalytic activity">
    <reaction evidence="1">
        <text>adenosine(37) in tRNA + dimethylallyl diphosphate = N(6)-dimethylallyladenosine(37) in tRNA + diphosphate</text>
        <dbReference type="Rhea" id="RHEA:26482"/>
        <dbReference type="Rhea" id="RHEA-COMP:10162"/>
        <dbReference type="Rhea" id="RHEA-COMP:10375"/>
        <dbReference type="ChEBI" id="CHEBI:33019"/>
        <dbReference type="ChEBI" id="CHEBI:57623"/>
        <dbReference type="ChEBI" id="CHEBI:74411"/>
        <dbReference type="ChEBI" id="CHEBI:74415"/>
        <dbReference type="EC" id="2.5.1.75"/>
    </reaction>
</comment>
<comment type="cofactor">
    <cofactor evidence="1">
        <name>Mg(2+)</name>
        <dbReference type="ChEBI" id="CHEBI:18420"/>
    </cofactor>
</comment>
<comment type="subunit">
    <text evidence="1">Monomer.</text>
</comment>
<comment type="similarity">
    <text evidence="1">Belongs to the IPP transferase family.</text>
</comment>
<comment type="sequence caution" evidence="2">
    <conflict type="erroneous initiation">
        <sequence resource="EMBL-CDS" id="CAH64265"/>
    </conflict>
</comment>
<name>MIAA_CHLAB</name>